<comment type="function">
    <text evidence="1">Catalyzes the conversion of GTP to 2,5-diamino-6-ribosylamino-4(3H)-pyrimidinone 5'-phosphate (DARP), formate and pyrophosphate.</text>
</comment>
<comment type="catalytic activity">
    <reaction evidence="1">
        <text>GTP + 4 H2O = 2,5-diamino-6-hydroxy-4-(5-phosphoribosylamino)-pyrimidine + formate + 2 phosphate + 3 H(+)</text>
        <dbReference type="Rhea" id="RHEA:23704"/>
        <dbReference type="ChEBI" id="CHEBI:15377"/>
        <dbReference type="ChEBI" id="CHEBI:15378"/>
        <dbReference type="ChEBI" id="CHEBI:15740"/>
        <dbReference type="ChEBI" id="CHEBI:37565"/>
        <dbReference type="ChEBI" id="CHEBI:43474"/>
        <dbReference type="ChEBI" id="CHEBI:58614"/>
        <dbReference type="EC" id="3.5.4.25"/>
    </reaction>
</comment>
<comment type="cofactor">
    <cofactor evidence="1">
        <name>Zn(2+)</name>
        <dbReference type="ChEBI" id="CHEBI:29105"/>
    </cofactor>
    <text evidence="1">Binds 1 zinc ion per subunit.</text>
</comment>
<comment type="pathway">
    <text evidence="1">Cofactor biosynthesis; riboflavin biosynthesis; 5-amino-6-(D-ribitylamino)uracil from GTP: step 1/4.</text>
</comment>
<comment type="similarity">
    <text evidence="1">Belongs to the GTP cyclohydrolase II family.</text>
</comment>
<protein>
    <recommendedName>
        <fullName evidence="1">GTP cyclohydrolase-2</fullName>
        <ecNumber evidence="1">3.5.4.25</ecNumber>
    </recommendedName>
    <alternativeName>
        <fullName evidence="1">GTP cyclohydrolase II</fullName>
    </alternativeName>
</protein>
<proteinExistence type="inferred from homology"/>
<name>RIBA_SHEB9</name>
<evidence type="ECO:0000255" key="1">
    <source>
        <dbReference type="HAMAP-Rule" id="MF_00179"/>
    </source>
</evidence>
<reference key="1">
    <citation type="submission" date="2007-11" db="EMBL/GenBank/DDBJ databases">
        <title>Complete sequence of chromosome of Shewanella baltica OS195.</title>
        <authorList>
            <consortium name="US DOE Joint Genome Institute"/>
            <person name="Copeland A."/>
            <person name="Lucas S."/>
            <person name="Lapidus A."/>
            <person name="Barry K."/>
            <person name="Glavina del Rio T."/>
            <person name="Dalin E."/>
            <person name="Tice H."/>
            <person name="Pitluck S."/>
            <person name="Chain P."/>
            <person name="Malfatti S."/>
            <person name="Shin M."/>
            <person name="Vergez L."/>
            <person name="Schmutz J."/>
            <person name="Larimer F."/>
            <person name="Land M."/>
            <person name="Hauser L."/>
            <person name="Kyrpides N."/>
            <person name="Kim E."/>
            <person name="Brettar I."/>
            <person name="Rodrigues J."/>
            <person name="Konstantinidis K."/>
            <person name="Klappenbach J."/>
            <person name="Hofle M."/>
            <person name="Tiedje J."/>
            <person name="Richardson P."/>
        </authorList>
    </citation>
    <scope>NUCLEOTIDE SEQUENCE [LARGE SCALE GENOMIC DNA]</scope>
    <source>
        <strain>OS195</strain>
    </source>
</reference>
<keyword id="KW-0342">GTP-binding</keyword>
<keyword id="KW-0378">Hydrolase</keyword>
<keyword id="KW-0479">Metal-binding</keyword>
<keyword id="KW-0547">Nucleotide-binding</keyword>
<keyword id="KW-0686">Riboflavin biosynthesis</keyword>
<keyword id="KW-0862">Zinc</keyword>
<sequence length="204" mass="23015">MSIKYVATSKLPTPWGVFAMHGFEDTESGKEHVALTFGTLSADEPVLGRIHSECLTGDALFSLRCDCGFQLQAAMQNIAETGSGFILYLRQEGRGIGLLNKIRAYELQDKGANTVEANEQLGFEADMRKYDMIKPMLEQIGVKHVRLMTNNPRKVKAMKEFGIEVVERVPLQVGKNRYNEAYLKTKSTELGHMMSEYHFMDENK</sequence>
<organism>
    <name type="scientific">Shewanella baltica (strain OS195)</name>
    <dbReference type="NCBI Taxonomy" id="399599"/>
    <lineage>
        <taxon>Bacteria</taxon>
        <taxon>Pseudomonadati</taxon>
        <taxon>Pseudomonadota</taxon>
        <taxon>Gammaproteobacteria</taxon>
        <taxon>Alteromonadales</taxon>
        <taxon>Shewanellaceae</taxon>
        <taxon>Shewanella</taxon>
    </lineage>
</organism>
<feature type="chain" id="PRO_1000077260" description="GTP cyclohydrolase-2">
    <location>
        <begin position="1"/>
        <end position="204"/>
    </location>
</feature>
<feature type="active site" description="Proton acceptor" evidence="1">
    <location>
        <position position="126"/>
    </location>
</feature>
<feature type="active site" description="Nucleophile" evidence="1">
    <location>
        <position position="128"/>
    </location>
</feature>
<feature type="binding site" evidence="1">
    <location>
        <begin position="49"/>
        <end position="53"/>
    </location>
    <ligand>
        <name>GTP</name>
        <dbReference type="ChEBI" id="CHEBI:37565"/>
    </ligand>
</feature>
<feature type="binding site" evidence="1">
    <location>
        <position position="54"/>
    </location>
    <ligand>
        <name>Zn(2+)</name>
        <dbReference type="ChEBI" id="CHEBI:29105"/>
        <note>catalytic</note>
    </ligand>
</feature>
<feature type="binding site" evidence="1">
    <location>
        <position position="65"/>
    </location>
    <ligand>
        <name>Zn(2+)</name>
        <dbReference type="ChEBI" id="CHEBI:29105"/>
        <note>catalytic</note>
    </ligand>
</feature>
<feature type="binding site" evidence="1">
    <location>
        <position position="67"/>
    </location>
    <ligand>
        <name>Zn(2+)</name>
        <dbReference type="ChEBI" id="CHEBI:29105"/>
        <note>catalytic</note>
    </ligand>
</feature>
<feature type="binding site" evidence="1">
    <location>
        <position position="70"/>
    </location>
    <ligand>
        <name>GTP</name>
        <dbReference type="ChEBI" id="CHEBI:37565"/>
    </ligand>
</feature>
<feature type="binding site" evidence="1">
    <location>
        <begin position="92"/>
        <end position="94"/>
    </location>
    <ligand>
        <name>GTP</name>
        <dbReference type="ChEBI" id="CHEBI:37565"/>
    </ligand>
</feature>
<feature type="binding site" evidence="1">
    <location>
        <position position="114"/>
    </location>
    <ligand>
        <name>GTP</name>
        <dbReference type="ChEBI" id="CHEBI:37565"/>
    </ligand>
</feature>
<feature type="binding site" evidence="1">
    <location>
        <position position="149"/>
    </location>
    <ligand>
        <name>GTP</name>
        <dbReference type="ChEBI" id="CHEBI:37565"/>
    </ligand>
</feature>
<feature type="binding site" evidence="1">
    <location>
        <position position="154"/>
    </location>
    <ligand>
        <name>GTP</name>
        <dbReference type="ChEBI" id="CHEBI:37565"/>
    </ligand>
</feature>
<accession>A9KXC4</accession>
<gene>
    <name evidence="1" type="primary">ribA</name>
    <name type="ordered locus">Sbal195_1690</name>
</gene>
<dbReference type="EC" id="3.5.4.25" evidence="1"/>
<dbReference type="EMBL" id="CP000891">
    <property type="protein sequence ID" value="ABX48863.1"/>
    <property type="molecule type" value="Genomic_DNA"/>
</dbReference>
<dbReference type="RefSeq" id="WP_006087423.1">
    <property type="nucleotide sequence ID" value="NC_009997.1"/>
</dbReference>
<dbReference type="SMR" id="A9KXC4"/>
<dbReference type="GeneID" id="11771918"/>
<dbReference type="KEGG" id="sbn:Sbal195_1690"/>
<dbReference type="HOGENOM" id="CLU_020273_2_1_6"/>
<dbReference type="UniPathway" id="UPA00275">
    <property type="reaction ID" value="UER00400"/>
</dbReference>
<dbReference type="Proteomes" id="UP000000770">
    <property type="component" value="Chromosome"/>
</dbReference>
<dbReference type="GO" id="GO:0005829">
    <property type="term" value="C:cytosol"/>
    <property type="evidence" value="ECO:0007669"/>
    <property type="project" value="TreeGrafter"/>
</dbReference>
<dbReference type="GO" id="GO:0005525">
    <property type="term" value="F:GTP binding"/>
    <property type="evidence" value="ECO:0007669"/>
    <property type="project" value="UniProtKB-KW"/>
</dbReference>
<dbReference type="GO" id="GO:0003935">
    <property type="term" value="F:GTP cyclohydrolase II activity"/>
    <property type="evidence" value="ECO:0007669"/>
    <property type="project" value="UniProtKB-UniRule"/>
</dbReference>
<dbReference type="GO" id="GO:0008270">
    <property type="term" value="F:zinc ion binding"/>
    <property type="evidence" value="ECO:0007669"/>
    <property type="project" value="UniProtKB-UniRule"/>
</dbReference>
<dbReference type="GO" id="GO:0009231">
    <property type="term" value="P:riboflavin biosynthetic process"/>
    <property type="evidence" value="ECO:0007669"/>
    <property type="project" value="UniProtKB-UniRule"/>
</dbReference>
<dbReference type="CDD" id="cd00641">
    <property type="entry name" value="GTP_cyclohydro2"/>
    <property type="match status" value="1"/>
</dbReference>
<dbReference type="FunFam" id="3.40.50.10990:FF:000002">
    <property type="entry name" value="GTP cyclohydrolase-2"/>
    <property type="match status" value="1"/>
</dbReference>
<dbReference type="Gene3D" id="3.40.50.10990">
    <property type="entry name" value="GTP cyclohydrolase II"/>
    <property type="match status" value="1"/>
</dbReference>
<dbReference type="HAMAP" id="MF_00179">
    <property type="entry name" value="RibA"/>
    <property type="match status" value="1"/>
</dbReference>
<dbReference type="InterPro" id="IPR032677">
    <property type="entry name" value="GTP_cyclohydro_II"/>
</dbReference>
<dbReference type="InterPro" id="IPR000926">
    <property type="entry name" value="RibA"/>
</dbReference>
<dbReference type="InterPro" id="IPR036144">
    <property type="entry name" value="RibA-like_sf"/>
</dbReference>
<dbReference type="NCBIfam" id="NF001591">
    <property type="entry name" value="PRK00393.1"/>
    <property type="match status" value="1"/>
</dbReference>
<dbReference type="NCBIfam" id="TIGR00505">
    <property type="entry name" value="ribA"/>
    <property type="match status" value="1"/>
</dbReference>
<dbReference type="PANTHER" id="PTHR21327:SF18">
    <property type="entry name" value="3,4-DIHYDROXY-2-BUTANONE 4-PHOSPHATE SYNTHASE"/>
    <property type="match status" value="1"/>
</dbReference>
<dbReference type="PANTHER" id="PTHR21327">
    <property type="entry name" value="GTP CYCLOHYDROLASE II-RELATED"/>
    <property type="match status" value="1"/>
</dbReference>
<dbReference type="Pfam" id="PF00925">
    <property type="entry name" value="GTP_cyclohydro2"/>
    <property type="match status" value="1"/>
</dbReference>
<dbReference type="SUPFAM" id="SSF142695">
    <property type="entry name" value="RibA-like"/>
    <property type="match status" value="1"/>
</dbReference>